<evidence type="ECO:0000250" key="1"/>
<evidence type="ECO:0000255" key="2"/>
<evidence type="ECO:0000255" key="3">
    <source>
        <dbReference type="PROSITE-ProRule" id="PRU00202"/>
    </source>
</evidence>
<evidence type="ECO:0000256" key="4">
    <source>
        <dbReference type="SAM" id="MobiDB-lite"/>
    </source>
</evidence>
<evidence type="ECO:0000305" key="5"/>
<evidence type="ECO:0007744" key="6">
    <source>
    </source>
</evidence>
<reference key="1">
    <citation type="submission" date="1998-08" db="EMBL/GenBank/DDBJ databases">
        <title>Signal peptide selection derived cDNAs from Arabidopsis thaliana leaves and guard cells.</title>
        <authorList>
            <person name="Stracke R."/>
            <person name="Palme K."/>
        </authorList>
    </citation>
    <scope>NUCLEOTIDE SEQUENCE [LARGE SCALE MRNA]</scope>
</reference>
<reference key="2">
    <citation type="submission" date="1999-08" db="EMBL/GenBank/DDBJ databases">
        <title>Vesicle traffic in Arabidopsis thaliana: characterization of AtSNAP33, a novel plant t-SNARE that interacts with syntaxins.</title>
        <authorList>
            <person name="Gansel X."/>
            <person name="Sticher L."/>
        </authorList>
    </citation>
    <scope>NUCLEOTIDE SEQUENCE</scope>
    <source>
        <strain>cv. Columbia</strain>
    </source>
</reference>
<reference key="3">
    <citation type="journal article" date="2000" name="Nature">
        <title>Sequence and analysis of chromosome 3 of the plant Arabidopsis thaliana.</title>
        <authorList>
            <person name="Salanoubat M."/>
            <person name="Lemcke K."/>
            <person name="Rieger M."/>
            <person name="Ansorge W."/>
            <person name="Unseld M."/>
            <person name="Fartmann B."/>
            <person name="Valle G."/>
            <person name="Bloecker H."/>
            <person name="Perez-Alonso M."/>
            <person name="Obermaier B."/>
            <person name="Delseny M."/>
            <person name="Boutry M."/>
            <person name="Grivell L.A."/>
            <person name="Mache R."/>
            <person name="Puigdomenech P."/>
            <person name="De Simone V."/>
            <person name="Choisne N."/>
            <person name="Artiguenave F."/>
            <person name="Robert C."/>
            <person name="Brottier P."/>
            <person name="Wincker P."/>
            <person name="Cattolico L."/>
            <person name="Weissenbach J."/>
            <person name="Saurin W."/>
            <person name="Quetier F."/>
            <person name="Schaefer M."/>
            <person name="Mueller-Auer S."/>
            <person name="Gabel C."/>
            <person name="Fuchs M."/>
            <person name="Benes V."/>
            <person name="Wurmbach E."/>
            <person name="Drzonek H."/>
            <person name="Erfle H."/>
            <person name="Jordan N."/>
            <person name="Bangert S."/>
            <person name="Wiedelmann R."/>
            <person name="Kranz H."/>
            <person name="Voss H."/>
            <person name="Holland R."/>
            <person name="Brandt P."/>
            <person name="Nyakatura G."/>
            <person name="Vezzi A."/>
            <person name="D'Angelo M."/>
            <person name="Pallavicini A."/>
            <person name="Toppo S."/>
            <person name="Simionati B."/>
            <person name="Conrad A."/>
            <person name="Hornischer K."/>
            <person name="Kauer G."/>
            <person name="Loehnert T.-H."/>
            <person name="Nordsiek G."/>
            <person name="Reichelt J."/>
            <person name="Scharfe M."/>
            <person name="Schoen O."/>
            <person name="Bargues M."/>
            <person name="Terol J."/>
            <person name="Climent J."/>
            <person name="Navarro P."/>
            <person name="Collado C."/>
            <person name="Perez-Perez A."/>
            <person name="Ottenwaelder B."/>
            <person name="Duchemin D."/>
            <person name="Cooke R."/>
            <person name="Laudie M."/>
            <person name="Berger-Llauro C."/>
            <person name="Purnelle B."/>
            <person name="Masuy D."/>
            <person name="de Haan M."/>
            <person name="Maarse A.C."/>
            <person name="Alcaraz J.-P."/>
            <person name="Cottet A."/>
            <person name="Casacuberta E."/>
            <person name="Monfort A."/>
            <person name="Argiriou A."/>
            <person name="Flores M."/>
            <person name="Liguori R."/>
            <person name="Vitale D."/>
            <person name="Mannhaupt G."/>
            <person name="Haase D."/>
            <person name="Schoof H."/>
            <person name="Rudd S."/>
            <person name="Zaccaria P."/>
            <person name="Mewes H.-W."/>
            <person name="Mayer K.F.X."/>
            <person name="Kaul S."/>
            <person name="Town C.D."/>
            <person name="Koo H.L."/>
            <person name="Tallon L.J."/>
            <person name="Jenkins J."/>
            <person name="Rooney T."/>
            <person name="Rizzo M."/>
            <person name="Walts A."/>
            <person name="Utterback T."/>
            <person name="Fujii C.Y."/>
            <person name="Shea T.P."/>
            <person name="Creasy T.H."/>
            <person name="Haas B."/>
            <person name="Maiti R."/>
            <person name="Wu D."/>
            <person name="Peterson J."/>
            <person name="Van Aken S."/>
            <person name="Pai G."/>
            <person name="Militscher J."/>
            <person name="Sellers P."/>
            <person name="Gill J.E."/>
            <person name="Feldblyum T.V."/>
            <person name="Preuss D."/>
            <person name="Lin X."/>
            <person name="Nierman W.C."/>
            <person name="Salzberg S.L."/>
            <person name="White O."/>
            <person name="Venter J.C."/>
            <person name="Fraser C.M."/>
            <person name="Kaneko T."/>
            <person name="Nakamura Y."/>
            <person name="Sato S."/>
            <person name="Kato T."/>
            <person name="Asamizu E."/>
            <person name="Sasamoto S."/>
            <person name="Kimura T."/>
            <person name="Idesawa K."/>
            <person name="Kawashima K."/>
            <person name="Kishida Y."/>
            <person name="Kiyokawa C."/>
            <person name="Kohara M."/>
            <person name="Matsumoto M."/>
            <person name="Matsuno A."/>
            <person name="Muraki A."/>
            <person name="Nakayama S."/>
            <person name="Nakazaki N."/>
            <person name="Shinpo S."/>
            <person name="Takeuchi C."/>
            <person name="Wada T."/>
            <person name="Watanabe A."/>
            <person name="Yamada M."/>
            <person name="Yasuda M."/>
            <person name="Tabata S."/>
        </authorList>
    </citation>
    <scope>NUCLEOTIDE SEQUENCE [LARGE SCALE GENOMIC DNA]</scope>
    <source>
        <strain>cv. Columbia</strain>
    </source>
</reference>
<reference key="4">
    <citation type="journal article" date="2017" name="Plant J.">
        <title>Araport11: a complete reannotation of the Arabidopsis thaliana reference genome.</title>
        <authorList>
            <person name="Cheng C.Y."/>
            <person name="Krishnakumar V."/>
            <person name="Chan A.P."/>
            <person name="Thibaud-Nissen F."/>
            <person name="Schobel S."/>
            <person name="Town C.D."/>
        </authorList>
    </citation>
    <scope>GENOME REANNOTATION</scope>
    <source>
        <strain>cv. Columbia</strain>
    </source>
</reference>
<reference key="5">
    <citation type="journal article" date="2003" name="Science">
        <title>Empirical analysis of transcriptional activity in the Arabidopsis genome.</title>
        <authorList>
            <person name="Yamada K."/>
            <person name="Lim J."/>
            <person name="Dale J.M."/>
            <person name="Chen H."/>
            <person name="Shinn P."/>
            <person name="Palm C.J."/>
            <person name="Southwick A.M."/>
            <person name="Wu H.C."/>
            <person name="Kim C.J."/>
            <person name="Nguyen M."/>
            <person name="Pham P.K."/>
            <person name="Cheuk R.F."/>
            <person name="Karlin-Newmann G."/>
            <person name="Liu S.X."/>
            <person name="Lam B."/>
            <person name="Sakano H."/>
            <person name="Wu T."/>
            <person name="Yu G."/>
            <person name="Miranda M."/>
            <person name="Quach H.L."/>
            <person name="Tripp M."/>
            <person name="Chang C.H."/>
            <person name="Lee J.M."/>
            <person name="Toriumi M.J."/>
            <person name="Chan M.M."/>
            <person name="Tang C.C."/>
            <person name="Onodera C.S."/>
            <person name="Deng J.M."/>
            <person name="Akiyama K."/>
            <person name="Ansari Y."/>
            <person name="Arakawa T."/>
            <person name="Banh J."/>
            <person name="Banno F."/>
            <person name="Bowser L."/>
            <person name="Brooks S.Y."/>
            <person name="Carninci P."/>
            <person name="Chao Q."/>
            <person name="Choy N."/>
            <person name="Enju A."/>
            <person name="Goldsmith A.D."/>
            <person name="Gurjal M."/>
            <person name="Hansen N.F."/>
            <person name="Hayashizaki Y."/>
            <person name="Johnson-Hopson C."/>
            <person name="Hsuan V.W."/>
            <person name="Iida K."/>
            <person name="Karnes M."/>
            <person name="Khan S."/>
            <person name="Koesema E."/>
            <person name="Ishida J."/>
            <person name="Jiang P.X."/>
            <person name="Jones T."/>
            <person name="Kawai J."/>
            <person name="Kamiya A."/>
            <person name="Meyers C."/>
            <person name="Nakajima M."/>
            <person name="Narusaka M."/>
            <person name="Seki M."/>
            <person name="Sakurai T."/>
            <person name="Satou M."/>
            <person name="Tamse R."/>
            <person name="Vaysberg M."/>
            <person name="Wallender E.K."/>
            <person name="Wong C."/>
            <person name="Yamamura Y."/>
            <person name="Yuan S."/>
            <person name="Shinozaki K."/>
            <person name="Davis R.W."/>
            <person name="Theologis A."/>
            <person name="Ecker J.R."/>
        </authorList>
    </citation>
    <scope>NUCLEOTIDE SEQUENCE [LARGE SCALE MRNA]</scope>
    <source>
        <strain>cv. Columbia</strain>
    </source>
</reference>
<reference key="6">
    <citation type="submission" date="2002-03" db="EMBL/GenBank/DDBJ databases">
        <title>Full-length cDNA from Arabidopsis thaliana.</title>
        <authorList>
            <person name="Brover V.V."/>
            <person name="Troukhan M.E."/>
            <person name="Alexandrov N.A."/>
            <person name="Lu Y.-P."/>
            <person name="Flavell R.B."/>
            <person name="Feldmann K.A."/>
        </authorList>
    </citation>
    <scope>NUCLEOTIDE SEQUENCE [LARGE SCALE MRNA]</scope>
</reference>
<reference key="7">
    <citation type="journal article" date="2009" name="Plant Physiol.">
        <title>Large-scale Arabidopsis phosphoproteome profiling reveals novel chloroplast kinase substrates and phosphorylation networks.</title>
        <authorList>
            <person name="Reiland S."/>
            <person name="Messerli G."/>
            <person name="Baerenfaller K."/>
            <person name="Gerrits B."/>
            <person name="Endler A."/>
            <person name="Grossmann J."/>
            <person name="Gruissem W."/>
            <person name="Baginsky S."/>
        </authorList>
    </citation>
    <scope>IDENTIFICATION BY MASS SPECTROMETRY [LARGE SCALE ANALYSIS]</scope>
</reference>
<reference key="8">
    <citation type="journal article" date="2012" name="Mol. Cell. Proteomics">
        <title>Comparative large-scale characterisation of plant vs. mammal proteins reveals similar and idiosyncratic N-alpha acetylation features.</title>
        <authorList>
            <person name="Bienvenut W.V."/>
            <person name="Sumpton D."/>
            <person name="Martinez A."/>
            <person name="Lilla S."/>
            <person name="Espagne C."/>
            <person name="Meinnel T."/>
            <person name="Giglione C."/>
        </authorList>
    </citation>
    <scope>ACETYLATION [LARGE SCALE ANALYSIS] AT MET-1</scope>
    <scope>IDENTIFICATION BY MASS SPECTROMETRY [LARGE SCALE ANALYSIS]</scope>
</reference>
<organism>
    <name type="scientific">Arabidopsis thaliana</name>
    <name type="common">Mouse-ear cress</name>
    <dbReference type="NCBI Taxonomy" id="3702"/>
    <lineage>
        <taxon>Eukaryota</taxon>
        <taxon>Viridiplantae</taxon>
        <taxon>Streptophyta</taxon>
        <taxon>Embryophyta</taxon>
        <taxon>Tracheophyta</taxon>
        <taxon>Spermatophyta</taxon>
        <taxon>Magnoliopsida</taxon>
        <taxon>eudicotyledons</taxon>
        <taxon>Gunneridae</taxon>
        <taxon>Pentapetalae</taxon>
        <taxon>rosids</taxon>
        <taxon>malvids</taxon>
        <taxon>Brassicales</taxon>
        <taxon>Brassicaceae</taxon>
        <taxon>Camelineae</taxon>
        <taxon>Arabidopsis</taxon>
    </lineage>
</organism>
<sequence>MNDLLSGSFKTSVADGSSPPHSHNIEMSKAKVSGGSCHGGNNLDTFFLDVEVVNEDLKELDRLCHNLRSSNEQSKTLHNANAVKELKKKMDADVTAALKTARRLKGNLEALDRANEVNRSLPESGPGSSSDRQRTSVVNGLRKKLKDEMEKFSRVRETITNEYKETVGRMCFTVTGEYPDEATLERLISTGESETFLQKAIQEQGRGRILDTINEIQERHDAVKDIEKSLNELHQVFLDMAVLVEHQGAQLDDIEGNVKRANSLVRSGADRLVKARFYQKNTRKWTCFAILLLLIIVVLIVVFTVKPWESNGGGGGGAPRQATPVQAQPPPPPAVNRRLLR</sequence>
<comment type="function">
    <text evidence="1">Vesicle trafficking protein that functions in the secretory pathway.</text>
</comment>
<comment type="subunit">
    <text evidence="1">Part of the t-SNARE complex.</text>
</comment>
<comment type="subcellular location">
    <subcellularLocation>
        <location evidence="1">Membrane</location>
        <topology evidence="1">Single-pass type IV membrane protein</topology>
    </subcellularLocation>
</comment>
<comment type="similarity">
    <text evidence="5">Belongs to the syntaxin family.</text>
</comment>
<keyword id="KW-0007">Acetylation</keyword>
<keyword id="KW-0175">Coiled coil</keyword>
<keyword id="KW-0472">Membrane</keyword>
<keyword id="KW-0653">Protein transport</keyword>
<keyword id="KW-1185">Reference proteome</keyword>
<keyword id="KW-0812">Transmembrane</keyword>
<keyword id="KW-1133">Transmembrane helix</keyword>
<keyword id="KW-0813">Transport</keyword>
<gene>
    <name type="primary">SYP122</name>
    <name type="ordered locus">At3g52400</name>
    <name type="ORF">F22O6_220</name>
</gene>
<accession>Q9SVC2</accession>
<accession>Q9SUJ2</accession>
<feature type="chain" id="PRO_0000210247" description="Syntaxin-122">
    <location>
        <begin position="1"/>
        <end position="341"/>
    </location>
</feature>
<feature type="topological domain" description="Cytoplasmic" evidence="2">
    <location>
        <begin position="1"/>
        <end position="284"/>
    </location>
</feature>
<feature type="transmembrane region" description="Helical; Anchor for type IV membrane protein" evidence="2">
    <location>
        <begin position="285"/>
        <end position="305"/>
    </location>
</feature>
<feature type="topological domain" description="Vesicular" evidence="2">
    <location>
        <begin position="306"/>
        <end position="341"/>
    </location>
</feature>
<feature type="domain" description="t-SNARE coiled-coil homology" evidence="3">
    <location>
        <begin position="213"/>
        <end position="275"/>
    </location>
</feature>
<feature type="region of interest" description="Disordered" evidence="4">
    <location>
        <begin position="1"/>
        <end position="22"/>
    </location>
</feature>
<feature type="region of interest" description="Disordered" evidence="4">
    <location>
        <begin position="111"/>
        <end position="137"/>
    </location>
</feature>
<feature type="region of interest" description="Disordered" evidence="4">
    <location>
        <begin position="312"/>
        <end position="341"/>
    </location>
</feature>
<feature type="coiled-coil region" evidence="2">
    <location>
        <begin position="64"/>
        <end position="185"/>
    </location>
</feature>
<feature type="compositionally biased region" description="Polar residues" evidence="4">
    <location>
        <begin position="8"/>
        <end position="21"/>
    </location>
</feature>
<feature type="compositionally biased region" description="Polar residues" evidence="4">
    <location>
        <begin position="126"/>
        <end position="137"/>
    </location>
</feature>
<feature type="modified residue" description="N-acetylmethionine" evidence="6">
    <location>
        <position position="1"/>
    </location>
</feature>
<feature type="sequence conflict" description="In Ref. 2 and 6." evidence="5" ref="2 6">
    <original>N</original>
    <variation>S</variation>
    <location>
        <position position="214"/>
    </location>
</feature>
<proteinExistence type="evidence at protein level"/>
<protein>
    <recommendedName>
        <fullName>Syntaxin-122</fullName>
        <shortName>AtSYP122</shortName>
    </recommendedName>
    <alternativeName>
        <fullName>Synt4</fullName>
    </alternativeName>
</protein>
<dbReference type="EMBL" id="AF083808">
    <property type="protein sequence ID" value="AAN60366.1"/>
    <property type="molecule type" value="mRNA"/>
</dbReference>
<dbReference type="EMBL" id="AJ245407">
    <property type="protein sequence ID" value="CAB52174.1"/>
    <property type="molecule type" value="mRNA"/>
</dbReference>
<dbReference type="EMBL" id="AL050300">
    <property type="protein sequence ID" value="CAB43444.1"/>
    <property type="molecule type" value="Genomic_DNA"/>
</dbReference>
<dbReference type="EMBL" id="CP002686">
    <property type="protein sequence ID" value="AEE78943.1"/>
    <property type="molecule type" value="Genomic_DNA"/>
</dbReference>
<dbReference type="EMBL" id="AY050907">
    <property type="protein sequence ID" value="AAK93584.1"/>
    <property type="molecule type" value="mRNA"/>
</dbReference>
<dbReference type="EMBL" id="AY091410">
    <property type="protein sequence ID" value="AAM14349.1"/>
    <property type="molecule type" value="mRNA"/>
</dbReference>
<dbReference type="EMBL" id="AY087633">
    <property type="protein sequence ID" value="AAM65172.1"/>
    <property type="molecule type" value="mRNA"/>
</dbReference>
<dbReference type="PIR" id="T08459">
    <property type="entry name" value="T08459"/>
</dbReference>
<dbReference type="PIR" id="T48847">
    <property type="entry name" value="T48847"/>
</dbReference>
<dbReference type="RefSeq" id="NP_190808.1">
    <property type="nucleotide sequence ID" value="NM_115100.3"/>
</dbReference>
<dbReference type="SMR" id="Q9SVC2"/>
<dbReference type="BioGRID" id="9723">
    <property type="interactions" value="48"/>
</dbReference>
<dbReference type="FunCoup" id="Q9SVC2">
    <property type="interactions" value="579"/>
</dbReference>
<dbReference type="IntAct" id="Q9SVC2">
    <property type="interactions" value="41"/>
</dbReference>
<dbReference type="STRING" id="3702.Q9SVC2"/>
<dbReference type="iPTMnet" id="Q9SVC2"/>
<dbReference type="SwissPalm" id="Q9SVC2"/>
<dbReference type="PaxDb" id="3702-AT3G52400.1"/>
<dbReference type="ProteomicsDB" id="226772"/>
<dbReference type="EnsemblPlants" id="AT3G52400.1">
    <property type="protein sequence ID" value="AT3G52400.1"/>
    <property type="gene ID" value="AT3G52400"/>
</dbReference>
<dbReference type="GeneID" id="824405"/>
<dbReference type="Gramene" id="AT3G52400.1">
    <property type="protein sequence ID" value="AT3G52400.1"/>
    <property type="gene ID" value="AT3G52400"/>
</dbReference>
<dbReference type="KEGG" id="ath:AT3G52400"/>
<dbReference type="Araport" id="AT3G52400"/>
<dbReference type="TAIR" id="AT3G52400">
    <property type="gene designation" value="SYP122"/>
</dbReference>
<dbReference type="eggNOG" id="KOG0810">
    <property type="taxonomic scope" value="Eukaryota"/>
</dbReference>
<dbReference type="HOGENOM" id="CLU_042423_1_1_1"/>
<dbReference type="InParanoid" id="Q9SVC2"/>
<dbReference type="OMA" id="RANEVNR"/>
<dbReference type="PhylomeDB" id="Q9SVC2"/>
<dbReference type="PRO" id="PR:Q9SVC2"/>
<dbReference type="Proteomes" id="UP000006548">
    <property type="component" value="Chromosome 3"/>
</dbReference>
<dbReference type="ExpressionAtlas" id="Q9SVC2">
    <property type="expression patterns" value="baseline and differential"/>
</dbReference>
<dbReference type="GO" id="GO:0005829">
    <property type="term" value="C:cytosol"/>
    <property type="evidence" value="ECO:0007005"/>
    <property type="project" value="TAIR"/>
</dbReference>
<dbReference type="GO" id="GO:0005886">
    <property type="term" value="C:plasma membrane"/>
    <property type="evidence" value="ECO:0000314"/>
    <property type="project" value="TAIR"/>
</dbReference>
<dbReference type="GO" id="GO:0009506">
    <property type="term" value="C:plasmodesma"/>
    <property type="evidence" value="ECO:0007005"/>
    <property type="project" value="TAIR"/>
</dbReference>
<dbReference type="GO" id="GO:0005484">
    <property type="term" value="F:SNAP receptor activity"/>
    <property type="evidence" value="ECO:0007669"/>
    <property type="project" value="InterPro"/>
</dbReference>
<dbReference type="GO" id="GO:0050832">
    <property type="term" value="P:defense response to fungus"/>
    <property type="evidence" value="ECO:0000316"/>
    <property type="project" value="TAIR"/>
</dbReference>
<dbReference type="GO" id="GO:0006886">
    <property type="term" value="P:intracellular protein transport"/>
    <property type="evidence" value="ECO:0007669"/>
    <property type="project" value="InterPro"/>
</dbReference>
<dbReference type="GO" id="GO:0006612">
    <property type="term" value="P:protein targeting to membrane"/>
    <property type="evidence" value="ECO:0000314"/>
    <property type="project" value="TAIR"/>
</dbReference>
<dbReference type="GO" id="GO:0016192">
    <property type="term" value="P:vesicle-mediated transport"/>
    <property type="evidence" value="ECO:0007669"/>
    <property type="project" value="InterPro"/>
</dbReference>
<dbReference type="CDD" id="cd15848">
    <property type="entry name" value="SNARE_syntaxin1-like"/>
    <property type="match status" value="1"/>
</dbReference>
<dbReference type="CDD" id="cd00179">
    <property type="entry name" value="SynN"/>
    <property type="match status" value="1"/>
</dbReference>
<dbReference type="FunFam" id="1.20.58.70:FF:000003">
    <property type="entry name" value="Qa-SNARE, Sso1/Syntaxin1-type, SYP12A-group"/>
    <property type="match status" value="1"/>
</dbReference>
<dbReference type="FunFam" id="1.20.5.110:FF:000008">
    <property type="entry name" value="Syntaxin 132"/>
    <property type="match status" value="1"/>
</dbReference>
<dbReference type="Gene3D" id="1.20.5.110">
    <property type="match status" value="1"/>
</dbReference>
<dbReference type="Gene3D" id="1.20.58.70">
    <property type="match status" value="1"/>
</dbReference>
<dbReference type="InterPro" id="IPR010989">
    <property type="entry name" value="SNARE"/>
</dbReference>
<dbReference type="InterPro" id="IPR045242">
    <property type="entry name" value="Syntaxin"/>
</dbReference>
<dbReference type="InterPro" id="IPR006012">
    <property type="entry name" value="Syntaxin/epimorphin_CS"/>
</dbReference>
<dbReference type="InterPro" id="IPR006011">
    <property type="entry name" value="Syntaxin_N"/>
</dbReference>
<dbReference type="InterPro" id="IPR000727">
    <property type="entry name" value="T_SNARE_dom"/>
</dbReference>
<dbReference type="PANTHER" id="PTHR19957">
    <property type="entry name" value="SYNTAXIN"/>
    <property type="match status" value="1"/>
</dbReference>
<dbReference type="PANTHER" id="PTHR19957:SF269">
    <property type="entry name" value="SYNTAXIN-122"/>
    <property type="match status" value="1"/>
</dbReference>
<dbReference type="Pfam" id="PF05739">
    <property type="entry name" value="SNARE"/>
    <property type="match status" value="1"/>
</dbReference>
<dbReference type="Pfam" id="PF00804">
    <property type="entry name" value="Syntaxin"/>
    <property type="match status" value="1"/>
</dbReference>
<dbReference type="SMART" id="SM00503">
    <property type="entry name" value="SynN"/>
    <property type="match status" value="1"/>
</dbReference>
<dbReference type="SMART" id="SM00397">
    <property type="entry name" value="t_SNARE"/>
    <property type="match status" value="1"/>
</dbReference>
<dbReference type="SUPFAM" id="SSF47661">
    <property type="entry name" value="t-snare proteins"/>
    <property type="match status" value="1"/>
</dbReference>
<dbReference type="PROSITE" id="PS00914">
    <property type="entry name" value="SYNTAXIN"/>
    <property type="match status" value="1"/>
</dbReference>
<dbReference type="PROSITE" id="PS50192">
    <property type="entry name" value="T_SNARE"/>
    <property type="match status" value="1"/>
</dbReference>
<name>SY122_ARATH</name>